<dbReference type="EC" id="4.2.1.9" evidence="1"/>
<dbReference type="EMBL" id="CP000308">
    <property type="protein sequence ID" value="ABG12093.1"/>
    <property type="molecule type" value="Genomic_DNA"/>
</dbReference>
<dbReference type="RefSeq" id="WP_002212014.1">
    <property type="nucleotide sequence ID" value="NZ_CP009906.1"/>
</dbReference>
<dbReference type="SMR" id="Q1CBS9"/>
<dbReference type="GeneID" id="57974808"/>
<dbReference type="KEGG" id="ypa:YPA_0124"/>
<dbReference type="UniPathway" id="UPA00047">
    <property type="reaction ID" value="UER00057"/>
</dbReference>
<dbReference type="UniPathway" id="UPA00049">
    <property type="reaction ID" value="UER00061"/>
</dbReference>
<dbReference type="Proteomes" id="UP000001971">
    <property type="component" value="Chromosome"/>
</dbReference>
<dbReference type="GO" id="GO:0005829">
    <property type="term" value="C:cytosol"/>
    <property type="evidence" value="ECO:0007669"/>
    <property type="project" value="TreeGrafter"/>
</dbReference>
<dbReference type="GO" id="GO:0051537">
    <property type="term" value="F:2 iron, 2 sulfur cluster binding"/>
    <property type="evidence" value="ECO:0007669"/>
    <property type="project" value="UniProtKB-UniRule"/>
</dbReference>
<dbReference type="GO" id="GO:0004160">
    <property type="term" value="F:dihydroxy-acid dehydratase activity"/>
    <property type="evidence" value="ECO:0007669"/>
    <property type="project" value="UniProtKB-UniRule"/>
</dbReference>
<dbReference type="GO" id="GO:0000287">
    <property type="term" value="F:magnesium ion binding"/>
    <property type="evidence" value="ECO:0007669"/>
    <property type="project" value="UniProtKB-UniRule"/>
</dbReference>
<dbReference type="GO" id="GO:0009097">
    <property type="term" value="P:isoleucine biosynthetic process"/>
    <property type="evidence" value="ECO:0007669"/>
    <property type="project" value="UniProtKB-UniRule"/>
</dbReference>
<dbReference type="GO" id="GO:0009099">
    <property type="term" value="P:L-valine biosynthetic process"/>
    <property type="evidence" value="ECO:0007669"/>
    <property type="project" value="UniProtKB-UniRule"/>
</dbReference>
<dbReference type="FunFam" id="3.50.30.80:FF:000001">
    <property type="entry name" value="Dihydroxy-acid dehydratase"/>
    <property type="match status" value="1"/>
</dbReference>
<dbReference type="Gene3D" id="3.50.30.80">
    <property type="entry name" value="IlvD/EDD C-terminal domain-like"/>
    <property type="match status" value="1"/>
</dbReference>
<dbReference type="HAMAP" id="MF_00012">
    <property type="entry name" value="IlvD"/>
    <property type="match status" value="1"/>
</dbReference>
<dbReference type="InterPro" id="IPR042096">
    <property type="entry name" value="Dihydro-acid_dehy_C"/>
</dbReference>
<dbReference type="InterPro" id="IPR004404">
    <property type="entry name" value="DihydroxyA_deHydtase"/>
</dbReference>
<dbReference type="InterPro" id="IPR020558">
    <property type="entry name" value="DiOHA_6PGluconate_deHydtase_CS"/>
</dbReference>
<dbReference type="InterPro" id="IPR056740">
    <property type="entry name" value="ILV_EDD_C"/>
</dbReference>
<dbReference type="InterPro" id="IPR000581">
    <property type="entry name" value="ILV_EDD_N"/>
</dbReference>
<dbReference type="InterPro" id="IPR037237">
    <property type="entry name" value="IlvD/EDD_N"/>
</dbReference>
<dbReference type="NCBIfam" id="TIGR00110">
    <property type="entry name" value="ilvD"/>
    <property type="match status" value="1"/>
</dbReference>
<dbReference type="NCBIfam" id="NF009103">
    <property type="entry name" value="PRK12448.1"/>
    <property type="match status" value="1"/>
</dbReference>
<dbReference type="PANTHER" id="PTHR43661">
    <property type="entry name" value="D-XYLONATE DEHYDRATASE"/>
    <property type="match status" value="1"/>
</dbReference>
<dbReference type="PANTHER" id="PTHR43661:SF3">
    <property type="entry name" value="D-XYLONATE DEHYDRATASE YAGF-RELATED"/>
    <property type="match status" value="1"/>
</dbReference>
<dbReference type="Pfam" id="PF24877">
    <property type="entry name" value="ILV_EDD_C"/>
    <property type="match status" value="1"/>
</dbReference>
<dbReference type="Pfam" id="PF00920">
    <property type="entry name" value="ILVD_EDD_N"/>
    <property type="match status" value="1"/>
</dbReference>
<dbReference type="SUPFAM" id="SSF143975">
    <property type="entry name" value="IlvD/EDD N-terminal domain-like"/>
    <property type="match status" value="1"/>
</dbReference>
<dbReference type="SUPFAM" id="SSF52016">
    <property type="entry name" value="LeuD/IlvD-like"/>
    <property type="match status" value="1"/>
</dbReference>
<dbReference type="PROSITE" id="PS00886">
    <property type="entry name" value="ILVD_EDD_1"/>
    <property type="match status" value="1"/>
</dbReference>
<dbReference type="PROSITE" id="PS00887">
    <property type="entry name" value="ILVD_EDD_2"/>
    <property type="match status" value="1"/>
</dbReference>
<accession>Q1CBS9</accession>
<feature type="chain" id="PRO_1000001084" description="Dihydroxy-acid dehydratase">
    <location>
        <begin position="1"/>
        <end position="616"/>
    </location>
</feature>
<feature type="active site" description="Proton acceptor" evidence="1">
    <location>
        <position position="517"/>
    </location>
</feature>
<feature type="binding site" evidence="1">
    <location>
        <position position="81"/>
    </location>
    <ligand>
        <name>Mg(2+)</name>
        <dbReference type="ChEBI" id="CHEBI:18420"/>
    </ligand>
</feature>
<feature type="binding site" evidence="1">
    <location>
        <position position="122"/>
    </location>
    <ligand>
        <name>[2Fe-2S] cluster</name>
        <dbReference type="ChEBI" id="CHEBI:190135"/>
    </ligand>
</feature>
<feature type="binding site" evidence="1">
    <location>
        <position position="123"/>
    </location>
    <ligand>
        <name>Mg(2+)</name>
        <dbReference type="ChEBI" id="CHEBI:18420"/>
    </ligand>
</feature>
<feature type="binding site" description="via carbamate group" evidence="1">
    <location>
        <position position="124"/>
    </location>
    <ligand>
        <name>Mg(2+)</name>
        <dbReference type="ChEBI" id="CHEBI:18420"/>
    </ligand>
</feature>
<feature type="binding site" evidence="1">
    <location>
        <position position="195"/>
    </location>
    <ligand>
        <name>[2Fe-2S] cluster</name>
        <dbReference type="ChEBI" id="CHEBI:190135"/>
    </ligand>
</feature>
<feature type="binding site" evidence="1">
    <location>
        <position position="491"/>
    </location>
    <ligand>
        <name>Mg(2+)</name>
        <dbReference type="ChEBI" id="CHEBI:18420"/>
    </ligand>
</feature>
<feature type="modified residue" description="N6-carboxylysine" evidence="1">
    <location>
        <position position="124"/>
    </location>
</feature>
<protein>
    <recommendedName>
        <fullName evidence="1">Dihydroxy-acid dehydratase</fullName>
        <shortName evidence="1">DAD</shortName>
        <ecNumber evidence="1">4.2.1.9</ecNumber>
    </recommendedName>
</protein>
<organism>
    <name type="scientific">Yersinia pestis bv. Antiqua (strain Antiqua)</name>
    <dbReference type="NCBI Taxonomy" id="360102"/>
    <lineage>
        <taxon>Bacteria</taxon>
        <taxon>Pseudomonadati</taxon>
        <taxon>Pseudomonadota</taxon>
        <taxon>Gammaproteobacteria</taxon>
        <taxon>Enterobacterales</taxon>
        <taxon>Yersiniaceae</taxon>
        <taxon>Yersinia</taxon>
    </lineage>
</organism>
<evidence type="ECO:0000255" key="1">
    <source>
        <dbReference type="HAMAP-Rule" id="MF_00012"/>
    </source>
</evidence>
<sequence length="616" mass="65499">MPKYRSHTTTHGRNMAGARALWRATGMTDDDFGKPIIAVVNSFTQFVPGHVHLRDLGKLVAEQIVASGGVAKEFNTIAVDDGIAMGHGGMLYSLPSRELIADSVEYMVNAHCADAMVCISNCDKITPGMLMASLRLNIPVIFVSGGPMEAGKTKLSDKIIKLDLIDAMIQGANPNVSDEESAQIERSACPTCGSCSGMFTANSMNCLNEALGLALPGNGSLLATHADRKQLFLDAGKHIVALTKRYYEQDDVSALPRNIANKAAFENAMILDIAMGGSTNTVLHLLAAAQEGEIDFSMTDIDHLSRKVPHLCKVAPSTQKYHMEDVHRAGGVIGILGELDRAGLLNRDVSNVLGLNLTQTLEAYDVMLTQDEGVKQMYAAGPAGIRTTKAFSQDCRYPSLDTDREEGCIRTREHAYSQDGGLAVLYGNIAADGCIVKTAGVDKDSLTFRGPAKVFESQDEAVEAILGGKVVAGDVVVIRYEGPKGGPGMQEMLYPTTYLKSMGLGKSCALLTDGRFSGGTSGLSIGHVSPEAASGGLIGLVQDGDFINIDIPNRGIVLDVSEAELAARRETEEAHGDAAWSPKGRERQVSYALRAYAMLATSADKGAVRDKSKLGG</sequence>
<proteinExistence type="inferred from homology"/>
<reference key="1">
    <citation type="journal article" date="2006" name="J. Bacteriol.">
        <title>Complete genome sequence of Yersinia pestis strains Antiqua and Nepal516: evidence of gene reduction in an emerging pathogen.</title>
        <authorList>
            <person name="Chain P.S.G."/>
            <person name="Hu P."/>
            <person name="Malfatti S.A."/>
            <person name="Radnedge L."/>
            <person name="Larimer F."/>
            <person name="Vergez L.M."/>
            <person name="Worsham P."/>
            <person name="Chu M.C."/>
            <person name="Andersen G.L."/>
        </authorList>
    </citation>
    <scope>NUCLEOTIDE SEQUENCE [LARGE SCALE GENOMIC DNA]</scope>
    <source>
        <strain>Antiqua</strain>
    </source>
</reference>
<name>ILVD_YERPA</name>
<gene>
    <name evidence="1" type="primary">ilvD</name>
    <name type="ordered locus">YPA_0124</name>
</gene>
<keyword id="KW-0001">2Fe-2S</keyword>
<keyword id="KW-0028">Amino-acid biosynthesis</keyword>
<keyword id="KW-0100">Branched-chain amino acid biosynthesis</keyword>
<keyword id="KW-0408">Iron</keyword>
<keyword id="KW-0411">Iron-sulfur</keyword>
<keyword id="KW-0456">Lyase</keyword>
<keyword id="KW-0460">Magnesium</keyword>
<keyword id="KW-0479">Metal-binding</keyword>
<comment type="function">
    <text evidence="1">Functions in the biosynthesis of branched-chain amino acids. Catalyzes the dehydration of (2R,3R)-2,3-dihydroxy-3-methylpentanoate (2,3-dihydroxy-3-methylvalerate) into 2-oxo-3-methylpentanoate (2-oxo-3-methylvalerate) and of (2R)-2,3-dihydroxy-3-methylbutanoate (2,3-dihydroxyisovalerate) into 2-oxo-3-methylbutanoate (2-oxoisovalerate), the penultimate precursor to L-isoleucine and L-valine, respectively.</text>
</comment>
<comment type="catalytic activity">
    <reaction evidence="1">
        <text>(2R)-2,3-dihydroxy-3-methylbutanoate = 3-methyl-2-oxobutanoate + H2O</text>
        <dbReference type="Rhea" id="RHEA:24809"/>
        <dbReference type="ChEBI" id="CHEBI:11851"/>
        <dbReference type="ChEBI" id="CHEBI:15377"/>
        <dbReference type="ChEBI" id="CHEBI:49072"/>
        <dbReference type="EC" id="4.2.1.9"/>
    </reaction>
    <physiologicalReaction direction="left-to-right" evidence="1">
        <dbReference type="Rhea" id="RHEA:24810"/>
    </physiologicalReaction>
</comment>
<comment type="catalytic activity">
    <reaction evidence="1">
        <text>(2R,3R)-2,3-dihydroxy-3-methylpentanoate = (S)-3-methyl-2-oxopentanoate + H2O</text>
        <dbReference type="Rhea" id="RHEA:27694"/>
        <dbReference type="ChEBI" id="CHEBI:15377"/>
        <dbReference type="ChEBI" id="CHEBI:35146"/>
        <dbReference type="ChEBI" id="CHEBI:49258"/>
        <dbReference type="EC" id="4.2.1.9"/>
    </reaction>
    <physiologicalReaction direction="left-to-right" evidence="1">
        <dbReference type="Rhea" id="RHEA:27695"/>
    </physiologicalReaction>
</comment>
<comment type="cofactor">
    <cofactor evidence="1">
        <name>[2Fe-2S] cluster</name>
        <dbReference type="ChEBI" id="CHEBI:190135"/>
    </cofactor>
    <text evidence="1">Binds 1 [2Fe-2S] cluster per subunit. This cluster acts as a Lewis acid cofactor.</text>
</comment>
<comment type="cofactor">
    <cofactor evidence="1">
        <name>Mg(2+)</name>
        <dbReference type="ChEBI" id="CHEBI:18420"/>
    </cofactor>
</comment>
<comment type="pathway">
    <text evidence="1">Amino-acid biosynthesis; L-isoleucine biosynthesis; L-isoleucine from 2-oxobutanoate: step 3/4.</text>
</comment>
<comment type="pathway">
    <text evidence="1">Amino-acid biosynthesis; L-valine biosynthesis; L-valine from pyruvate: step 3/4.</text>
</comment>
<comment type="subunit">
    <text evidence="1">Homodimer.</text>
</comment>
<comment type="similarity">
    <text evidence="1">Belongs to the IlvD/Edd family.</text>
</comment>